<accession>D5T166</accession>
<proteinExistence type="inferred from homology"/>
<organism>
    <name type="scientific">Leuconostoc kimchii (strain IMSNU 11154 / KCTC 2386 / IH25)</name>
    <dbReference type="NCBI Taxonomy" id="762051"/>
    <lineage>
        <taxon>Bacteria</taxon>
        <taxon>Bacillati</taxon>
        <taxon>Bacillota</taxon>
        <taxon>Bacilli</taxon>
        <taxon>Lactobacillales</taxon>
        <taxon>Lactobacillaceae</taxon>
        <taxon>Leuconostoc</taxon>
    </lineage>
</organism>
<keyword id="KW-0131">Cell cycle</keyword>
<keyword id="KW-0132">Cell division</keyword>
<keyword id="KW-1003">Cell membrane</keyword>
<keyword id="KW-0472">Membrane</keyword>
<keyword id="KW-0812">Transmembrane</keyword>
<keyword id="KW-1133">Transmembrane helix</keyword>
<feature type="chain" id="PRO_0000414778" description="Cell division protein DivIB">
    <location>
        <begin position="1"/>
        <end position="244"/>
    </location>
</feature>
<feature type="topological domain" description="Cytoplasmic" evidence="1">
    <location>
        <begin position="1"/>
        <end position="6"/>
    </location>
</feature>
<feature type="transmembrane region" description="Helical" evidence="1">
    <location>
        <begin position="7"/>
        <end position="27"/>
    </location>
</feature>
<feature type="topological domain" description="Extracellular" evidence="1">
    <location>
        <begin position="28"/>
        <end position="244"/>
    </location>
</feature>
<feature type="domain" description="POTRA" evidence="2">
    <location>
        <begin position="28"/>
        <end position="104"/>
    </location>
</feature>
<evidence type="ECO:0000255" key="1">
    <source>
        <dbReference type="HAMAP-Rule" id="MF_00912"/>
    </source>
</evidence>
<evidence type="ECO:0000255" key="2">
    <source>
        <dbReference type="PROSITE-ProRule" id="PRU01115"/>
    </source>
</evidence>
<comment type="function">
    <text evidence="1">Cell division protein that may be involved in stabilizing or promoting the assembly of the division complex.</text>
</comment>
<comment type="subcellular location">
    <subcellularLocation>
        <location evidence="1">Cell membrane</location>
        <topology evidence="1">Single-pass type II membrane protein</topology>
    </subcellularLocation>
    <text evidence="1">Localizes to the division septum.</text>
</comment>
<comment type="similarity">
    <text evidence="1">Belongs to the FtsQ/DivIB family. DivIB subfamily.</text>
</comment>
<protein>
    <recommendedName>
        <fullName evidence="1">Cell division protein DivIB</fullName>
    </recommendedName>
</protein>
<dbReference type="EMBL" id="CP001758">
    <property type="protein sequence ID" value="ADG40015.1"/>
    <property type="molecule type" value="Genomic_DNA"/>
</dbReference>
<dbReference type="RefSeq" id="WP_013102613.1">
    <property type="nucleotide sequence ID" value="NC_014136.1"/>
</dbReference>
<dbReference type="STRING" id="762051.LKI_02360"/>
<dbReference type="KEGG" id="lki:LKI_02360"/>
<dbReference type="PATRIC" id="fig|762051.18.peg.478"/>
<dbReference type="eggNOG" id="COG1589">
    <property type="taxonomic scope" value="Bacteria"/>
</dbReference>
<dbReference type="HOGENOM" id="CLU_046278_0_1_9"/>
<dbReference type="OrthoDB" id="1819027at2"/>
<dbReference type="Proteomes" id="UP000002362">
    <property type="component" value="Chromosome"/>
</dbReference>
<dbReference type="GO" id="GO:0032153">
    <property type="term" value="C:cell division site"/>
    <property type="evidence" value="ECO:0007669"/>
    <property type="project" value="UniProtKB-UniRule"/>
</dbReference>
<dbReference type="GO" id="GO:0005886">
    <property type="term" value="C:plasma membrane"/>
    <property type="evidence" value="ECO:0007669"/>
    <property type="project" value="UniProtKB-SubCell"/>
</dbReference>
<dbReference type="GO" id="GO:0043093">
    <property type="term" value="P:FtsZ-dependent cytokinesis"/>
    <property type="evidence" value="ECO:0007669"/>
    <property type="project" value="UniProtKB-UniRule"/>
</dbReference>
<dbReference type="Gene3D" id="3.40.50.10960">
    <property type="match status" value="1"/>
</dbReference>
<dbReference type="HAMAP" id="MF_00912">
    <property type="entry name" value="DivIB"/>
    <property type="match status" value="1"/>
</dbReference>
<dbReference type="InterPro" id="IPR005548">
    <property type="entry name" value="Cell_div_FtsQ/DivIB_C"/>
</dbReference>
<dbReference type="InterPro" id="IPR026580">
    <property type="entry name" value="DivIB"/>
</dbReference>
<dbReference type="InterPro" id="IPR050487">
    <property type="entry name" value="FtsQ_DivIB"/>
</dbReference>
<dbReference type="InterPro" id="IPR034746">
    <property type="entry name" value="POTRA"/>
</dbReference>
<dbReference type="PANTHER" id="PTHR37820">
    <property type="entry name" value="CELL DIVISION PROTEIN DIVIB"/>
    <property type="match status" value="1"/>
</dbReference>
<dbReference type="PANTHER" id="PTHR37820:SF1">
    <property type="entry name" value="CELL DIVISION PROTEIN FTSQ"/>
    <property type="match status" value="1"/>
</dbReference>
<dbReference type="Pfam" id="PF03799">
    <property type="entry name" value="FtsQ_DivIB_C"/>
    <property type="match status" value="1"/>
</dbReference>
<dbReference type="PROSITE" id="PS51779">
    <property type="entry name" value="POTRA"/>
    <property type="match status" value="1"/>
</dbReference>
<reference key="1">
    <citation type="journal article" date="2010" name="J. Bacteriol.">
        <title>Complete genome sequence analysis of Leuconostoc kimchii IMSNU 11154.</title>
        <authorList>
            <person name="Oh H.M."/>
            <person name="Cho Y.J."/>
            <person name="Kim B.K."/>
            <person name="Roe J.H."/>
            <person name="Kang S.O."/>
            <person name="Nahm B.H."/>
            <person name="Jeong G."/>
            <person name="Han H.U."/>
            <person name="Chun J."/>
        </authorList>
    </citation>
    <scope>NUCLEOTIDE SEQUENCE [LARGE SCALE GENOMIC DNA]</scope>
    <source>
        <strain>IMSNU 11154 / KCTC 2386 / IH25</strain>
    </source>
</reference>
<sequence>MKIKWPLQLWISLAVFVTIAVGTLLLLQPWQTIKTVTVQSTSIPSEKIERYAGIYPNTPSWKVTGQTQFIAQKIVKHDDKIDTAKVTQEGSHVTIDIAEKVTAGYIQKSKQWYVINRNGIQKKIEIPEGNAPVYTGFNNPADVKTVVSEFVKLELTLRQNISQINFSPNKDNANRLLIIMNDGNTVYATIGTFGKKISYYPGIAAQMPSKGVVDLQFGAYSYAYGTAQANGTKKKADNKAHQKQ</sequence>
<gene>
    <name evidence="1" type="primary">divIB</name>
    <name type="ordered locus">LKI_02360</name>
</gene>
<name>DIVIB_LEUKI</name>